<protein>
    <recommendedName>
        <fullName>Hemoglobin subunit alpha-1</fullName>
    </recommendedName>
    <alternativeName>
        <fullName>Alpha-1-globin</fullName>
    </alternativeName>
    <alternativeName>
        <fullName>Hemoglobin alpha-1 chain</fullName>
    </alternativeName>
    <component>
        <recommendedName>
            <fullName evidence="1">Hemopressin</fullName>
        </recommendedName>
    </component>
</protein>
<feature type="chain" id="PRO_0000052654" description="Hemoglobin subunit alpha-1">
    <location>
        <begin position="1"/>
        <end position="142"/>
    </location>
</feature>
<feature type="peptide" id="PRO_0000455883" description="Hemopressin" evidence="1">
    <location>
        <begin position="96"/>
        <end position="104"/>
    </location>
</feature>
<feature type="domain" description="Globin" evidence="2">
    <location>
        <begin position="2"/>
        <end position="142"/>
    </location>
</feature>
<feature type="binding site" evidence="2">
    <location>
        <position position="59"/>
    </location>
    <ligand>
        <name>O2</name>
        <dbReference type="ChEBI" id="CHEBI:15379"/>
    </ligand>
</feature>
<feature type="binding site" description="proximal binding residue" evidence="2">
    <location>
        <position position="88"/>
    </location>
    <ligand>
        <name>heme b</name>
        <dbReference type="ChEBI" id="CHEBI:60344"/>
    </ligand>
    <ligandPart>
        <name>Fe</name>
        <dbReference type="ChEBI" id="CHEBI:18248"/>
    </ligandPart>
</feature>
<keyword id="KW-0349">Heme</keyword>
<keyword id="KW-0408">Iron</keyword>
<keyword id="KW-0479">Metal-binding</keyword>
<keyword id="KW-0561">Oxygen transport</keyword>
<keyword id="KW-0813">Transport</keyword>
<reference key="1">
    <citation type="journal article" date="1992" name="J. Biol. Chem.">
        <title>Tandemly duplicated alpha globin genes of gibbon.</title>
        <authorList>
            <person name="Bailey A.D."/>
            <person name="Stanhope M."/>
            <person name="Slightom J.L."/>
            <person name="Goodman M."/>
            <person name="Shen C.C."/>
            <person name="Shen C.-K.J."/>
        </authorList>
    </citation>
    <scope>NUCLEOTIDE SEQUENCE [GENOMIC DNA]</scope>
    <source>
        <tissue>Blood</tissue>
    </source>
</reference>
<accession>Q9TS35</accession>
<organism>
    <name type="scientific">Hylobates lar</name>
    <name type="common">Lar gibbon</name>
    <name type="synonym">White-handed gibbon</name>
    <dbReference type="NCBI Taxonomy" id="9580"/>
    <lineage>
        <taxon>Eukaryota</taxon>
        <taxon>Metazoa</taxon>
        <taxon>Chordata</taxon>
        <taxon>Craniata</taxon>
        <taxon>Vertebrata</taxon>
        <taxon>Euteleostomi</taxon>
        <taxon>Mammalia</taxon>
        <taxon>Eutheria</taxon>
        <taxon>Euarchontoglires</taxon>
        <taxon>Primates</taxon>
        <taxon>Haplorrhini</taxon>
        <taxon>Catarrhini</taxon>
        <taxon>Hylobatidae</taxon>
        <taxon>Hylobates</taxon>
    </lineage>
</organism>
<evidence type="ECO:0000250" key="1">
    <source>
        <dbReference type="UniProtKB" id="P01946"/>
    </source>
</evidence>
<evidence type="ECO:0000255" key="2">
    <source>
        <dbReference type="PROSITE-ProRule" id="PRU00238"/>
    </source>
</evidence>
<comment type="function">
    <text>Involved in oxygen transport from the lung to the various peripheral tissues.</text>
</comment>
<comment type="function">
    <molecule>Hemopressin</molecule>
    <text evidence="1">Hemopressin acts as an antagonist peptide of the cannabinoid receptor CNR1. Hemopressin-binding efficiently blocks cannabinoid receptor CNR1 and subsequent signaling.</text>
</comment>
<comment type="subunit">
    <text>Heterotetramer of two alpha chains and two beta chains.</text>
</comment>
<comment type="tissue specificity">
    <text>Red blood cells.</text>
</comment>
<comment type="similarity">
    <text evidence="2">Belongs to the globin family.</text>
</comment>
<proteinExistence type="evidence at transcript level"/>
<sequence length="142" mass="15268">MVLSPADKTNVKAAWGKVGAHAGDYGAEALERMFLSFPTTKTYFPHFDLSHGSAQVKGHGKKVADALTNAVAHVDDMPNALSALSDLHAHKLRVDPVNFKLLSHCLLVTLAAHHPAEFTPAVHASLDKFLASVSTVLTSKYR</sequence>
<name>HBA1_HYLLA</name>
<gene>
    <name type="primary">HBA1</name>
</gene>
<dbReference type="EMBL" id="M94634">
    <property type="protein sequence ID" value="AAK13563.1"/>
    <property type="molecule type" value="Genomic_DNA"/>
</dbReference>
<dbReference type="SMR" id="Q9TS35"/>
<dbReference type="GO" id="GO:0072562">
    <property type="term" value="C:blood microparticle"/>
    <property type="evidence" value="ECO:0007669"/>
    <property type="project" value="TreeGrafter"/>
</dbReference>
<dbReference type="GO" id="GO:0031838">
    <property type="term" value="C:haptoglobin-hemoglobin complex"/>
    <property type="evidence" value="ECO:0007669"/>
    <property type="project" value="TreeGrafter"/>
</dbReference>
<dbReference type="GO" id="GO:0005833">
    <property type="term" value="C:hemoglobin complex"/>
    <property type="evidence" value="ECO:0007669"/>
    <property type="project" value="InterPro"/>
</dbReference>
<dbReference type="GO" id="GO:0031720">
    <property type="term" value="F:haptoglobin binding"/>
    <property type="evidence" value="ECO:0007669"/>
    <property type="project" value="TreeGrafter"/>
</dbReference>
<dbReference type="GO" id="GO:0020037">
    <property type="term" value="F:heme binding"/>
    <property type="evidence" value="ECO:0007669"/>
    <property type="project" value="InterPro"/>
</dbReference>
<dbReference type="GO" id="GO:0005506">
    <property type="term" value="F:iron ion binding"/>
    <property type="evidence" value="ECO:0007669"/>
    <property type="project" value="InterPro"/>
</dbReference>
<dbReference type="GO" id="GO:0043177">
    <property type="term" value="F:organic acid binding"/>
    <property type="evidence" value="ECO:0007669"/>
    <property type="project" value="TreeGrafter"/>
</dbReference>
<dbReference type="GO" id="GO:0019825">
    <property type="term" value="F:oxygen binding"/>
    <property type="evidence" value="ECO:0007669"/>
    <property type="project" value="InterPro"/>
</dbReference>
<dbReference type="GO" id="GO:0005344">
    <property type="term" value="F:oxygen carrier activity"/>
    <property type="evidence" value="ECO:0007669"/>
    <property type="project" value="UniProtKB-KW"/>
</dbReference>
<dbReference type="GO" id="GO:0004601">
    <property type="term" value="F:peroxidase activity"/>
    <property type="evidence" value="ECO:0007669"/>
    <property type="project" value="TreeGrafter"/>
</dbReference>
<dbReference type="GO" id="GO:0042744">
    <property type="term" value="P:hydrogen peroxide catabolic process"/>
    <property type="evidence" value="ECO:0007669"/>
    <property type="project" value="TreeGrafter"/>
</dbReference>
<dbReference type="CDD" id="cd08927">
    <property type="entry name" value="Hb-alpha-like"/>
    <property type="match status" value="1"/>
</dbReference>
<dbReference type="FunFam" id="1.10.490.10:FF:000002">
    <property type="entry name" value="Hemoglobin subunit alpha"/>
    <property type="match status" value="1"/>
</dbReference>
<dbReference type="Gene3D" id="1.10.490.10">
    <property type="entry name" value="Globins"/>
    <property type="match status" value="1"/>
</dbReference>
<dbReference type="InterPro" id="IPR000971">
    <property type="entry name" value="Globin"/>
</dbReference>
<dbReference type="InterPro" id="IPR009050">
    <property type="entry name" value="Globin-like_sf"/>
</dbReference>
<dbReference type="InterPro" id="IPR012292">
    <property type="entry name" value="Globin/Proto"/>
</dbReference>
<dbReference type="InterPro" id="IPR002338">
    <property type="entry name" value="Hemoglobin_a-typ"/>
</dbReference>
<dbReference type="InterPro" id="IPR050056">
    <property type="entry name" value="Hemoglobin_oxygen_transport"/>
</dbReference>
<dbReference type="InterPro" id="IPR002339">
    <property type="entry name" value="Hemoglobin_pi"/>
</dbReference>
<dbReference type="PANTHER" id="PTHR11442">
    <property type="entry name" value="HEMOGLOBIN FAMILY MEMBER"/>
    <property type="match status" value="1"/>
</dbReference>
<dbReference type="PANTHER" id="PTHR11442:SF48">
    <property type="entry name" value="HEMOGLOBIN SUBUNIT ALPHA"/>
    <property type="match status" value="1"/>
</dbReference>
<dbReference type="Pfam" id="PF00042">
    <property type="entry name" value="Globin"/>
    <property type="match status" value="1"/>
</dbReference>
<dbReference type="PRINTS" id="PR00612">
    <property type="entry name" value="ALPHAHAEM"/>
</dbReference>
<dbReference type="PRINTS" id="PR00815">
    <property type="entry name" value="PIHAEM"/>
</dbReference>
<dbReference type="SUPFAM" id="SSF46458">
    <property type="entry name" value="Globin-like"/>
    <property type="match status" value="1"/>
</dbReference>
<dbReference type="PROSITE" id="PS01033">
    <property type="entry name" value="GLOBIN"/>
    <property type="match status" value="1"/>
</dbReference>